<comment type="function">
    <text evidence="1">Probable transcription factor involved in plant development.</text>
</comment>
<comment type="subcellular location">
    <subcellularLocation>
        <location evidence="5">Nucleus</location>
    </subcellularLocation>
</comment>
<comment type="tissue specificity">
    <text evidence="4">Expressed in cotyledons, leaves and flowers, and in the elongation zone in root.</text>
</comment>
<comment type="similarity">
    <text evidence="5">Belongs to the GRAS family.</text>
</comment>
<protein>
    <recommendedName>
        <fullName>Scarecrow-like protein 9</fullName>
        <shortName>AtSCL9</shortName>
    </recommendedName>
    <alternativeName>
        <fullName>GRAS family protein 13</fullName>
        <shortName>AtGRAS-13</shortName>
    </alternativeName>
</protein>
<keyword id="KW-0539">Nucleus</keyword>
<keyword id="KW-1185">Reference proteome</keyword>
<keyword id="KW-0804">Transcription</keyword>
<keyword id="KW-0805">Transcription regulation</keyword>
<dbReference type="EMBL" id="AC004684">
    <property type="protein sequence ID" value="AAC23635.1"/>
    <property type="molecule type" value="Genomic_DNA"/>
</dbReference>
<dbReference type="EMBL" id="CP002685">
    <property type="protein sequence ID" value="AEC09430.1"/>
    <property type="molecule type" value="Genomic_DNA"/>
</dbReference>
<dbReference type="EMBL" id="AF036306">
    <property type="protein sequence ID" value="AAD24409.1"/>
    <property type="molecule type" value="mRNA"/>
</dbReference>
<dbReference type="PIR" id="T02531">
    <property type="entry name" value="T02531"/>
</dbReference>
<dbReference type="PIR" id="T51240">
    <property type="entry name" value="T51240"/>
</dbReference>
<dbReference type="RefSeq" id="NP_181301.1">
    <property type="nucleotide sequence ID" value="NM_129321.2"/>
</dbReference>
<dbReference type="SMR" id="O80933"/>
<dbReference type="FunCoup" id="O80933">
    <property type="interactions" value="1191"/>
</dbReference>
<dbReference type="STRING" id="3702.O80933"/>
<dbReference type="iPTMnet" id="O80933"/>
<dbReference type="PaxDb" id="3702-AT2G37650.1"/>
<dbReference type="ProteomicsDB" id="232914"/>
<dbReference type="EnsemblPlants" id="AT2G37650.1">
    <property type="protein sequence ID" value="AT2G37650.1"/>
    <property type="gene ID" value="AT2G37650"/>
</dbReference>
<dbReference type="GeneID" id="818342"/>
<dbReference type="Gramene" id="AT2G37650.1">
    <property type="protein sequence ID" value="AT2G37650.1"/>
    <property type="gene ID" value="AT2G37650"/>
</dbReference>
<dbReference type="KEGG" id="ath:AT2G37650"/>
<dbReference type="Araport" id="AT2G37650"/>
<dbReference type="TAIR" id="AT2G37650"/>
<dbReference type="eggNOG" id="ENOG502QSQ6">
    <property type="taxonomic scope" value="Eukaryota"/>
</dbReference>
<dbReference type="HOGENOM" id="CLU_011924_2_2_1"/>
<dbReference type="InParanoid" id="O80933"/>
<dbReference type="PhylomeDB" id="O80933"/>
<dbReference type="PRO" id="PR:O80933"/>
<dbReference type="Proteomes" id="UP000006548">
    <property type="component" value="Chromosome 2"/>
</dbReference>
<dbReference type="ExpressionAtlas" id="O80933">
    <property type="expression patterns" value="baseline and differential"/>
</dbReference>
<dbReference type="GO" id="GO:0005634">
    <property type="term" value="C:nucleus"/>
    <property type="evidence" value="ECO:0007669"/>
    <property type="project" value="UniProtKB-SubCell"/>
</dbReference>
<dbReference type="GO" id="GO:0003700">
    <property type="term" value="F:DNA-binding transcription factor activity"/>
    <property type="evidence" value="ECO:0000250"/>
    <property type="project" value="TAIR"/>
</dbReference>
<dbReference type="GO" id="GO:0006355">
    <property type="term" value="P:regulation of DNA-templated transcription"/>
    <property type="evidence" value="ECO:0000304"/>
    <property type="project" value="TAIR"/>
</dbReference>
<dbReference type="InterPro" id="IPR005202">
    <property type="entry name" value="TF_GRAS"/>
</dbReference>
<dbReference type="PANTHER" id="PTHR31636">
    <property type="entry name" value="OSJNBA0084A10.13 PROTEIN-RELATED"/>
    <property type="match status" value="1"/>
</dbReference>
<dbReference type="Pfam" id="PF03514">
    <property type="entry name" value="GRAS"/>
    <property type="match status" value="1"/>
</dbReference>
<dbReference type="PROSITE" id="PS50985">
    <property type="entry name" value="GRAS"/>
    <property type="match status" value="1"/>
</dbReference>
<evidence type="ECO:0000250" key="1"/>
<evidence type="ECO:0000255" key="2">
    <source>
        <dbReference type="PROSITE-ProRule" id="PRU01191"/>
    </source>
</evidence>
<evidence type="ECO:0000256" key="3">
    <source>
        <dbReference type="SAM" id="MobiDB-lite"/>
    </source>
</evidence>
<evidence type="ECO:0000269" key="4">
    <source>
    </source>
</evidence>
<evidence type="ECO:0000305" key="5"/>
<accession>O80933</accession>
<accession>Q9SYQ5</accession>
<proteinExistence type="evidence at transcript level"/>
<organism>
    <name type="scientific">Arabidopsis thaliana</name>
    <name type="common">Mouse-ear cress</name>
    <dbReference type="NCBI Taxonomy" id="3702"/>
    <lineage>
        <taxon>Eukaryota</taxon>
        <taxon>Viridiplantae</taxon>
        <taxon>Streptophyta</taxon>
        <taxon>Embryophyta</taxon>
        <taxon>Tracheophyta</taxon>
        <taxon>Spermatophyta</taxon>
        <taxon>Magnoliopsida</taxon>
        <taxon>eudicotyledons</taxon>
        <taxon>Gunneridae</taxon>
        <taxon>Pentapetalae</taxon>
        <taxon>rosids</taxon>
        <taxon>malvids</taxon>
        <taxon>Brassicales</taxon>
        <taxon>Brassicaceae</taxon>
        <taxon>Camelineae</taxon>
        <taxon>Arabidopsis</taxon>
    </lineage>
</organism>
<feature type="chain" id="PRO_0000350853" description="Scarecrow-like protein 9">
    <location>
        <begin position="1"/>
        <end position="718"/>
    </location>
</feature>
<feature type="domain" description="GRAS" evidence="2">
    <location>
        <begin position="335"/>
        <end position="713"/>
    </location>
</feature>
<feature type="region of interest" description="Disordered" evidence="3">
    <location>
        <begin position="305"/>
        <end position="338"/>
    </location>
</feature>
<feature type="region of interest" description="Leucine repeat I (LRI)" evidence="2">
    <location>
        <begin position="342"/>
        <end position="402"/>
    </location>
</feature>
<feature type="region of interest" description="VHIID" evidence="2">
    <location>
        <begin position="421"/>
        <end position="484"/>
    </location>
</feature>
<feature type="region of interest" description="Leucine repeat II (LRII)" evidence="2">
    <location>
        <begin position="500"/>
        <end position="532"/>
    </location>
</feature>
<feature type="region of interest" description="PFYRE" evidence="2">
    <location>
        <begin position="541"/>
        <end position="635"/>
    </location>
</feature>
<feature type="region of interest" description="SAW" evidence="2">
    <location>
        <begin position="638"/>
        <end position="713"/>
    </location>
</feature>
<feature type="short sequence motif" description="VHIID" evidence="2">
    <location>
        <begin position="452"/>
        <end position="456"/>
    </location>
</feature>
<feature type="compositionally biased region" description="Basic residues" evidence="3">
    <location>
        <begin position="316"/>
        <end position="328"/>
    </location>
</feature>
<reference key="1">
    <citation type="journal article" date="1999" name="Nature">
        <title>Sequence and analysis of chromosome 2 of the plant Arabidopsis thaliana.</title>
        <authorList>
            <person name="Lin X."/>
            <person name="Kaul S."/>
            <person name="Rounsley S.D."/>
            <person name="Shea T.P."/>
            <person name="Benito M.-I."/>
            <person name="Town C.D."/>
            <person name="Fujii C.Y."/>
            <person name="Mason T.M."/>
            <person name="Bowman C.L."/>
            <person name="Barnstead M.E."/>
            <person name="Feldblyum T.V."/>
            <person name="Buell C.R."/>
            <person name="Ketchum K.A."/>
            <person name="Lee J.J."/>
            <person name="Ronning C.M."/>
            <person name="Koo H.L."/>
            <person name="Moffat K.S."/>
            <person name="Cronin L.A."/>
            <person name="Shen M."/>
            <person name="Pai G."/>
            <person name="Van Aken S."/>
            <person name="Umayam L."/>
            <person name="Tallon L.J."/>
            <person name="Gill J.E."/>
            <person name="Adams M.D."/>
            <person name="Carrera A.J."/>
            <person name="Creasy T.H."/>
            <person name="Goodman H.M."/>
            <person name="Somerville C.R."/>
            <person name="Copenhaver G.P."/>
            <person name="Preuss D."/>
            <person name="Nierman W.C."/>
            <person name="White O."/>
            <person name="Eisen J.A."/>
            <person name="Salzberg S.L."/>
            <person name="Fraser C.M."/>
            <person name="Venter J.C."/>
        </authorList>
    </citation>
    <scope>NUCLEOTIDE SEQUENCE [LARGE SCALE GENOMIC DNA]</scope>
    <source>
        <strain>cv. Columbia</strain>
    </source>
</reference>
<reference key="2">
    <citation type="journal article" date="2017" name="Plant J.">
        <title>Araport11: a complete reannotation of the Arabidopsis thaliana reference genome.</title>
        <authorList>
            <person name="Cheng C.Y."/>
            <person name="Krishnakumar V."/>
            <person name="Chan A.P."/>
            <person name="Thibaud-Nissen F."/>
            <person name="Schobel S."/>
            <person name="Town C.D."/>
        </authorList>
    </citation>
    <scope>GENOME REANNOTATION</scope>
    <source>
        <strain>cv. Columbia</strain>
    </source>
</reference>
<reference key="3">
    <citation type="journal article" date="1999" name="Plant J.">
        <title>The GRAS gene family in Arabidopsis: sequence characterization and basic expression analysis of the SCARECROW-LIKE genes.</title>
        <authorList>
            <person name="Pysh L.D."/>
            <person name="Wysocka-Diller J.W."/>
            <person name="Camilleri C."/>
            <person name="Bouchez D."/>
            <person name="Benfey P.N."/>
        </authorList>
    </citation>
    <scope>NUCLEOTIDE SEQUENCE [MRNA] OF 586-718</scope>
</reference>
<reference key="4">
    <citation type="journal article" date="2004" name="Plant Mol. Biol.">
        <title>Genome-wide analysis of the GRAS gene family in rice and Arabidopsis.</title>
        <authorList>
            <person name="Tian C."/>
            <person name="Wan P."/>
            <person name="Sun S."/>
            <person name="Li J."/>
            <person name="Chen M."/>
        </authorList>
    </citation>
    <scope>GENE FAMILY</scope>
</reference>
<reference key="5">
    <citation type="journal article" date="2008" name="Plant Mol. Biol.">
        <title>Large-scale analysis of the GRAS gene family in Arabidopsis thaliana.</title>
        <authorList>
            <person name="Lee M.-H."/>
            <person name="Kim B."/>
            <person name="Song S.-K."/>
            <person name="Heo J.-O."/>
            <person name="Yu N.-I."/>
            <person name="Lee S.A."/>
            <person name="Kim M."/>
            <person name="Kim D.G."/>
            <person name="Sohn S.O."/>
            <person name="Lim C.E."/>
            <person name="Chang K.S."/>
            <person name="Lee M.M."/>
            <person name="Lim J."/>
        </authorList>
    </citation>
    <scope>GENE FAMILY</scope>
    <scope>TISSUE SPECIFICITY</scope>
</reference>
<sequence>MITEPSLTGISGMVNRNRLSGLPDQPSSHSFTPVTLYDGFNYNLSSDHINTVVAAPENSVFIREEEEEEDPADDFDFSDAVLGYISQMLNEEDMDDKVCMLQESLDLEAAERSLYEAIGKKYPPSPERNLAFAERNSENLDRVVPGNYTGGDCIGFGNGGIKPLSSGFTLDFRNPQSCSSILSVPQSNGLITIYGDGIDESSKNNRENHQSVWLFRREIEEANRFNPEENELIVNFREENCVSKARKNSSRDEICVEEERSSKLPAVFGEDILRSDVVDKILVHVPGGESMKEFNALRDVLKKGVEKKKASDAQGGKRRARGRGRGRGRGGGGGQNGKKEVVDLRSLLIHCAQAVAADDRRCAGQLLKQIRLHSTPFGDGNQRLAHCFANGLEARLAGTGSQIYKGIVSKPRSAAAVLKAHQLFLACCPFRKLSYFITNKTIRDLVGNSQRVHVIDFGILYGFQWPTLIHRFSMYGSPKVRITGIEFPQPGFRPAQRVEETGQRLAAYAKLFGVPFEYKAIAKKWDAIQLEDLDIDRDEITVVNCLYRAENLHDESVKVESCRDTVLNLIGKINPDLFVFGIVNGAYNAPFFVTRFREALFHFSSIFDMLETIVPREDEERMFLEMEVFGREALNVIACEGWERVERPETYKQWHVRAMRSGLVQVPFDPSIMKTSLHKVHTFYHKDFVIDQDNRWLLQGWKGRTVMALSVWKPESKA</sequence>
<name>SCL9_ARATH</name>
<gene>
    <name type="primary">SCL9</name>
    <name type="ordered locus">At2g37650</name>
    <name type="ORF">F13M22.15</name>
</gene>